<organism>
    <name type="scientific">Mycobacterium bovis (strain BCG / Pasteur 1173P2)</name>
    <dbReference type="NCBI Taxonomy" id="410289"/>
    <lineage>
        <taxon>Bacteria</taxon>
        <taxon>Bacillati</taxon>
        <taxon>Actinomycetota</taxon>
        <taxon>Actinomycetes</taxon>
        <taxon>Mycobacteriales</taxon>
        <taxon>Mycobacteriaceae</taxon>
        <taxon>Mycobacterium</taxon>
        <taxon>Mycobacterium tuberculosis complex</taxon>
    </lineage>
</organism>
<accession>A1KMZ6</accession>
<dbReference type="EC" id="1.1.1.86" evidence="1"/>
<dbReference type="EMBL" id="AM408590">
    <property type="protein sequence ID" value="CAL73012.1"/>
    <property type="status" value="ALT_INIT"/>
    <property type="molecule type" value="Genomic_DNA"/>
</dbReference>
<dbReference type="SMR" id="A1KMZ6"/>
<dbReference type="KEGG" id="mbb:BCG_3023c"/>
<dbReference type="HOGENOM" id="CLU_033821_0_1_11"/>
<dbReference type="UniPathway" id="UPA00047">
    <property type="reaction ID" value="UER00056"/>
</dbReference>
<dbReference type="UniPathway" id="UPA00049">
    <property type="reaction ID" value="UER00060"/>
</dbReference>
<dbReference type="Proteomes" id="UP000001472">
    <property type="component" value="Chromosome"/>
</dbReference>
<dbReference type="GO" id="GO:0005829">
    <property type="term" value="C:cytosol"/>
    <property type="evidence" value="ECO:0007669"/>
    <property type="project" value="TreeGrafter"/>
</dbReference>
<dbReference type="GO" id="GO:0004455">
    <property type="term" value="F:ketol-acid reductoisomerase activity"/>
    <property type="evidence" value="ECO:0007669"/>
    <property type="project" value="UniProtKB-UniRule"/>
</dbReference>
<dbReference type="GO" id="GO:0000287">
    <property type="term" value="F:magnesium ion binding"/>
    <property type="evidence" value="ECO:0007669"/>
    <property type="project" value="UniProtKB-UniRule"/>
</dbReference>
<dbReference type="GO" id="GO:0050661">
    <property type="term" value="F:NADP binding"/>
    <property type="evidence" value="ECO:0007669"/>
    <property type="project" value="InterPro"/>
</dbReference>
<dbReference type="GO" id="GO:0009097">
    <property type="term" value="P:isoleucine biosynthetic process"/>
    <property type="evidence" value="ECO:0007669"/>
    <property type="project" value="UniProtKB-UniRule"/>
</dbReference>
<dbReference type="GO" id="GO:0009099">
    <property type="term" value="P:L-valine biosynthetic process"/>
    <property type="evidence" value="ECO:0007669"/>
    <property type="project" value="UniProtKB-UniRule"/>
</dbReference>
<dbReference type="FunFam" id="3.40.50.720:FF:000023">
    <property type="entry name" value="Ketol-acid reductoisomerase (NADP(+))"/>
    <property type="match status" value="1"/>
</dbReference>
<dbReference type="Gene3D" id="6.10.240.10">
    <property type="match status" value="1"/>
</dbReference>
<dbReference type="Gene3D" id="3.40.50.720">
    <property type="entry name" value="NAD(P)-binding Rossmann-like Domain"/>
    <property type="match status" value="1"/>
</dbReference>
<dbReference type="HAMAP" id="MF_00435">
    <property type="entry name" value="IlvC"/>
    <property type="match status" value="1"/>
</dbReference>
<dbReference type="InterPro" id="IPR008927">
    <property type="entry name" value="6-PGluconate_DH-like_C_sf"/>
</dbReference>
<dbReference type="InterPro" id="IPR013023">
    <property type="entry name" value="KARI"/>
</dbReference>
<dbReference type="InterPro" id="IPR000506">
    <property type="entry name" value="KARI_C"/>
</dbReference>
<dbReference type="InterPro" id="IPR013116">
    <property type="entry name" value="KARI_N"/>
</dbReference>
<dbReference type="InterPro" id="IPR014359">
    <property type="entry name" value="KARI_prok"/>
</dbReference>
<dbReference type="InterPro" id="IPR036291">
    <property type="entry name" value="NAD(P)-bd_dom_sf"/>
</dbReference>
<dbReference type="NCBIfam" id="TIGR00465">
    <property type="entry name" value="ilvC"/>
    <property type="match status" value="1"/>
</dbReference>
<dbReference type="NCBIfam" id="NF004017">
    <property type="entry name" value="PRK05479.1"/>
    <property type="match status" value="1"/>
</dbReference>
<dbReference type="PANTHER" id="PTHR21371">
    <property type="entry name" value="KETOL-ACID REDUCTOISOMERASE, MITOCHONDRIAL"/>
    <property type="match status" value="1"/>
</dbReference>
<dbReference type="PANTHER" id="PTHR21371:SF1">
    <property type="entry name" value="KETOL-ACID REDUCTOISOMERASE, MITOCHONDRIAL"/>
    <property type="match status" value="1"/>
</dbReference>
<dbReference type="Pfam" id="PF01450">
    <property type="entry name" value="KARI_C"/>
    <property type="match status" value="1"/>
</dbReference>
<dbReference type="Pfam" id="PF07991">
    <property type="entry name" value="KARI_N"/>
    <property type="match status" value="1"/>
</dbReference>
<dbReference type="PIRSF" id="PIRSF000116">
    <property type="entry name" value="IlvC_gammaproteo"/>
    <property type="match status" value="1"/>
</dbReference>
<dbReference type="SUPFAM" id="SSF48179">
    <property type="entry name" value="6-phosphogluconate dehydrogenase C-terminal domain-like"/>
    <property type="match status" value="1"/>
</dbReference>
<dbReference type="SUPFAM" id="SSF51735">
    <property type="entry name" value="NAD(P)-binding Rossmann-fold domains"/>
    <property type="match status" value="1"/>
</dbReference>
<dbReference type="PROSITE" id="PS51851">
    <property type="entry name" value="KARI_C"/>
    <property type="match status" value="1"/>
</dbReference>
<dbReference type="PROSITE" id="PS51850">
    <property type="entry name" value="KARI_N"/>
    <property type="match status" value="1"/>
</dbReference>
<reference key="1">
    <citation type="journal article" date="2007" name="Proc. Natl. Acad. Sci. U.S.A.">
        <title>Genome plasticity of BCG and impact on vaccine efficacy.</title>
        <authorList>
            <person name="Brosch R."/>
            <person name="Gordon S.V."/>
            <person name="Garnier T."/>
            <person name="Eiglmeier K."/>
            <person name="Frigui W."/>
            <person name="Valenti P."/>
            <person name="Dos Santos S."/>
            <person name="Duthoy S."/>
            <person name="Lacroix C."/>
            <person name="Garcia-Pelayo C."/>
            <person name="Inwald J.K."/>
            <person name="Golby P."/>
            <person name="Garcia J.N."/>
            <person name="Hewinson R.G."/>
            <person name="Behr M.A."/>
            <person name="Quail M.A."/>
            <person name="Churcher C."/>
            <person name="Barrell B.G."/>
            <person name="Parkhill J."/>
            <person name="Cole S.T."/>
        </authorList>
    </citation>
    <scope>NUCLEOTIDE SEQUENCE [LARGE SCALE GENOMIC DNA]</scope>
    <source>
        <strain>BCG / Pasteur 1173P2</strain>
    </source>
</reference>
<name>ILVC_MYCBP</name>
<feature type="chain" id="PRO_1000050538" description="Ketol-acid reductoisomerase (NADP(+))">
    <location>
        <begin position="1"/>
        <end position="337"/>
    </location>
</feature>
<feature type="domain" description="KARI N-terminal Rossmann" evidence="2">
    <location>
        <begin position="3"/>
        <end position="183"/>
    </location>
</feature>
<feature type="domain" description="KARI C-terminal knotted" evidence="3">
    <location>
        <begin position="184"/>
        <end position="329"/>
    </location>
</feature>
<feature type="active site" evidence="1">
    <location>
        <position position="109"/>
    </location>
</feature>
<feature type="binding site" evidence="1">
    <location>
        <begin position="26"/>
        <end position="29"/>
    </location>
    <ligand>
        <name>NADP(+)</name>
        <dbReference type="ChEBI" id="CHEBI:58349"/>
    </ligand>
</feature>
<feature type="binding site" evidence="1">
    <location>
        <position position="49"/>
    </location>
    <ligand>
        <name>NADP(+)</name>
        <dbReference type="ChEBI" id="CHEBI:58349"/>
    </ligand>
</feature>
<feature type="binding site" evidence="1">
    <location>
        <position position="52"/>
    </location>
    <ligand>
        <name>NADP(+)</name>
        <dbReference type="ChEBI" id="CHEBI:58349"/>
    </ligand>
</feature>
<feature type="binding site" evidence="1">
    <location>
        <position position="54"/>
    </location>
    <ligand>
        <name>NADP(+)</name>
        <dbReference type="ChEBI" id="CHEBI:58349"/>
    </ligand>
</feature>
<feature type="binding site" evidence="1">
    <location>
        <begin position="84"/>
        <end position="87"/>
    </location>
    <ligand>
        <name>NADP(+)</name>
        <dbReference type="ChEBI" id="CHEBI:58349"/>
    </ligand>
</feature>
<feature type="binding site" evidence="1">
    <location>
        <position position="135"/>
    </location>
    <ligand>
        <name>NADP(+)</name>
        <dbReference type="ChEBI" id="CHEBI:58349"/>
    </ligand>
</feature>
<feature type="binding site" evidence="1">
    <location>
        <position position="192"/>
    </location>
    <ligand>
        <name>Mg(2+)</name>
        <dbReference type="ChEBI" id="CHEBI:18420"/>
        <label>1</label>
    </ligand>
</feature>
<feature type="binding site" evidence="1">
    <location>
        <position position="192"/>
    </location>
    <ligand>
        <name>Mg(2+)</name>
        <dbReference type="ChEBI" id="CHEBI:18420"/>
        <label>2</label>
    </ligand>
</feature>
<feature type="binding site" evidence="1">
    <location>
        <position position="196"/>
    </location>
    <ligand>
        <name>Mg(2+)</name>
        <dbReference type="ChEBI" id="CHEBI:18420"/>
        <label>1</label>
    </ligand>
</feature>
<feature type="binding site" evidence="1">
    <location>
        <position position="228"/>
    </location>
    <ligand>
        <name>Mg(2+)</name>
        <dbReference type="ChEBI" id="CHEBI:18420"/>
        <label>2</label>
    </ligand>
</feature>
<feature type="binding site" evidence="1">
    <location>
        <position position="232"/>
    </location>
    <ligand>
        <name>Mg(2+)</name>
        <dbReference type="ChEBI" id="CHEBI:18420"/>
        <label>2</label>
    </ligand>
</feature>
<feature type="binding site" evidence="1">
    <location>
        <position position="253"/>
    </location>
    <ligand>
        <name>substrate</name>
    </ligand>
</feature>
<keyword id="KW-0028">Amino-acid biosynthesis</keyword>
<keyword id="KW-0100">Branched-chain amino acid biosynthesis</keyword>
<keyword id="KW-0460">Magnesium</keyword>
<keyword id="KW-0479">Metal-binding</keyword>
<keyword id="KW-0521">NADP</keyword>
<keyword id="KW-0560">Oxidoreductase</keyword>
<gene>
    <name evidence="1" type="primary">ilvC</name>
    <name type="ordered locus">BCG_3023c</name>
</gene>
<evidence type="ECO:0000255" key="1">
    <source>
        <dbReference type="HAMAP-Rule" id="MF_00435"/>
    </source>
</evidence>
<evidence type="ECO:0000255" key="2">
    <source>
        <dbReference type="PROSITE-ProRule" id="PRU01197"/>
    </source>
</evidence>
<evidence type="ECO:0000255" key="3">
    <source>
        <dbReference type="PROSITE-ProRule" id="PRU01198"/>
    </source>
</evidence>
<evidence type="ECO:0000305" key="4"/>
<protein>
    <recommendedName>
        <fullName evidence="1">Ketol-acid reductoisomerase (NADP(+))</fullName>
        <shortName evidence="1">KARI</shortName>
        <ecNumber evidence="1">1.1.1.86</ecNumber>
    </recommendedName>
    <alternativeName>
        <fullName evidence="1">Acetohydroxy-acid isomeroreductase</fullName>
        <shortName evidence="1">AHIR</shortName>
    </alternativeName>
    <alternativeName>
        <fullName evidence="1">Alpha-keto-beta-hydroxylacyl reductoisomerase</fullName>
    </alternativeName>
    <alternativeName>
        <fullName evidence="1">Ketol-acid reductoisomerase type 1</fullName>
    </alternativeName>
    <alternativeName>
        <fullName evidence="1">Ketol-acid reductoisomerase type I</fullName>
    </alternativeName>
</protein>
<proteinExistence type="inferred from homology"/>
<comment type="function">
    <text evidence="1">Involved in the biosynthesis of branched-chain amino acids (BCAA). Catalyzes an alkyl-migration followed by a ketol-acid reduction of (S)-2-acetolactate (S2AL) to yield (R)-2,3-dihydroxy-isovalerate. In the isomerase reaction, S2AL is rearranged via a Mg-dependent methyl migration to produce 3-hydroxy-3-methyl-2-ketobutyrate (HMKB). In the reductase reaction, this 2-ketoacid undergoes a metal-dependent reduction by NADPH to yield (R)-2,3-dihydroxy-isovalerate.</text>
</comment>
<comment type="catalytic activity">
    <reaction evidence="1">
        <text>(2R)-2,3-dihydroxy-3-methylbutanoate + NADP(+) = (2S)-2-acetolactate + NADPH + H(+)</text>
        <dbReference type="Rhea" id="RHEA:22068"/>
        <dbReference type="ChEBI" id="CHEBI:15378"/>
        <dbReference type="ChEBI" id="CHEBI:49072"/>
        <dbReference type="ChEBI" id="CHEBI:57783"/>
        <dbReference type="ChEBI" id="CHEBI:58349"/>
        <dbReference type="ChEBI" id="CHEBI:58476"/>
        <dbReference type="EC" id="1.1.1.86"/>
    </reaction>
</comment>
<comment type="catalytic activity">
    <reaction evidence="1">
        <text>(2R,3R)-2,3-dihydroxy-3-methylpentanoate + NADP(+) = (S)-2-ethyl-2-hydroxy-3-oxobutanoate + NADPH + H(+)</text>
        <dbReference type="Rhea" id="RHEA:13493"/>
        <dbReference type="ChEBI" id="CHEBI:15378"/>
        <dbReference type="ChEBI" id="CHEBI:49256"/>
        <dbReference type="ChEBI" id="CHEBI:49258"/>
        <dbReference type="ChEBI" id="CHEBI:57783"/>
        <dbReference type="ChEBI" id="CHEBI:58349"/>
        <dbReference type="EC" id="1.1.1.86"/>
    </reaction>
</comment>
<comment type="cofactor">
    <cofactor evidence="1">
        <name>Mg(2+)</name>
        <dbReference type="ChEBI" id="CHEBI:18420"/>
    </cofactor>
    <text evidence="1">Binds 2 magnesium ions per subunit.</text>
</comment>
<comment type="pathway">
    <text evidence="1">Amino-acid biosynthesis; L-isoleucine biosynthesis; L-isoleucine from 2-oxobutanoate: step 2/4.</text>
</comment>
<comment type="pathway">
    <text evidence="1">Amino-acid biosynthesis; L-valine biosynthesis; L-valine from pyruvate: step 2/4.</text>
</comment>
<comment type="similarity">
    <text evidence="1">Belongs to the ketol-acid reductoisomerase family.</text>
</comment>
<comment type="sequence caution" evidence="4">
    <conflict type="erroneous initiation">
        <sequence resource="EMBL-CDS" id="CAL73012"/>
    </conflict>
    <text>Truncated N-terminus.</text>
</comment>
<sequence>MALEMFYDDDADLSIIQGRKVGVIGYGSQGHAHSLSLRDSGVQVRVGLKQGSRSRPKVEEQGLDVDTPAEVAKWADVVMVLAPDTAQAEIFAGDIEPNLKPGDALFFGHGLNVHFGLIKPPADVAVAMVAPKGPGHLVRRQFVDGKGVPCLVAVEQDPRGDGLALALSYAKAIGGTRAGVIKTTFKDETETDLFGEQTVLCGGTEELVKAGFEVMVEAGYPAELAYFEVLHELKLIVDLMYEGGLARMYYSVSDTAEFGGYLSGPRVIDAGTKERMRDILREIQDGSFVHKLVADVEGGNKQLEELRRQNAEHPIEVVGKKLRDLMSWVDRPITETA</sequence>